<protein>
    <recommendedName>
        <fullName evidence="1">Alanine--tRNA ligase</fullName>
        <ecNumber evidence="1">6.1.1.7</ecNumber>
    </recommendedName>
    <alternativeName>
        <fullName evidence="1">Alanyl-tRNA synthetase</fullName>
        <shortName evidence="1">AlaRS</shortName>
    </alternativeName>
</protein>
<gene>
    <name evidence="1" type="primary">alaS</name>
    <name type="ordered locus">VP2548</name>
</gene>
<dbReference type="EC" id="6.1.1.7" evidence="1"/>
<dbReference type="EMBL" id="BA000031">
    <property type="protein sequence ID" value="BAC60811.1"/>
    <property type="molecule type" value="Genomic_DNA"/>
</dbReference>
<dbReference type="RefSeq" id="NP_798927.1">
    <property type="nucleotide sequence ID" value="NC_004603.1"/>
</dbReference>
<dbReference type="RefSeq" id="WP_005455546.1">
    <property type="nucleotide sequence ID" value="NC_004603.1"/>
</dbReference>
<dbReference type="SMR" id="Q87LR3"/>
<dbReference type="GeneID" id="1190072"/>
<dbReference type="KEGG" id="vpa:VP2548"/>
<dbReference type="PATRIC" id="fig|223926.6.peg.2446"/>
<dbReference type="eggNOG" id="COG0013">
    <property type="taxonomic scope" value="Bacteria"/>
</dbReference>
<dbReference type="HOGENOM" id="CLU_004485_1_1_6"/>
<dbReference type="Proteomes" id="UP000002493">
    <property type="component" value="Chromosome 1"/>
</dbReference>
<dbReference type="GO" id="GO:0005829">
    <property type="term" value="C:cytosol"/>
    <property type="evidence" value="ECO:0007669"/>
    <property type="project" value="TreeGrafter"/>
</dbReference>
<dbReference type="GO" id="GO:0004813">
    <property type="term" value="F:alanine-tRNA ligase activity"/>
    <property type="evidence" value="ECO:0007669"/>
    <property type="project" value="UniProtKB-UniRule"/>
</dbReference>
<dbReference type="GO" id="GO:0002161">
    <property type="term" value="F:aminoacyl-tRNA deacylase activity"/>
    <property type="evidence" value="ECO:0007669"/>
    <property type="project" value="TreeGrafter"/>
</dbReference>
<dbReference type="GO" id="GO:0005524">
    <property type="term" value="F:ATP binding"/>
    <property type="evidence" value="ECO:0007669"/>
    <property type="project" value="UniProtKB-UniRule"/>
</dbReference>
<dbReference type="GO" id="GO:0000049">
    <property type="term" value="F:tRNA binding"/>
    <property type="evidence" value="ECO:0007669"/>
    <property type="project" value="UniProtKB-KW"/>
</dbReference>
<dbReference type="GO" id="GO:0008270">
    <property type="term" value="F:zinc ion binding"/>
    <property type="evidence" value="ECO:0007669"/>
    <property type="project" value="UniProtKB-UniRule"/>
</dbReference>
<dbReference type="GO" id="GO:0006419">
    <property type="term" value="P:alanyl-tRNA aminoacylation"/>
    <property type="evidence" value="ECO:0007669"/>
    <property type="project" value="UniProtKB-UniRule"/>
</dbReference>
<dbReference type="GO" id="GO:0045892">
    <property type="term" value="P:negative regulation of DNA-templated transcription"/>
    <property type="evidence" value="ECO:0007669"/>
    <property type="project" value="TreeGrafter"/>
</dbReference>
<dbReference type="CDD" id="cd00673">
    <property type="entry name" value="AlaRS_core"/>
    <property type="match status" value="1"/>
</dbReference>
<dbReference type="FunFam" id="2.40.30.130:FF:000001">
    <property type="entry name" value="Alanine--tRNA ligase"/>
    <property type="match status" value="1"/>
</dbReference>
<dbReference type="FunFam" id="3.10.310.40:FF:000001">
    <property type="entry name" value="Alanine--tRNA ligase"/>
    <property type="match status" value="1"/>
</dbReference>
<dbReference type="FunFam" id="3.30.54.20:FF:000001">
    <property type="entry name" value="Alanine--tRNA ligase"/>
    <property type="match status" value="1"/>
</dbReference>
<dbReference type="FunFam" id="3.30.930.10:FF:000004">
    <property type="entry name" value="Alanine--tRNA ligase"/>
    <property type="match status" value="1"/>
</dbReference>
<dbReference type="FunFam" id="3.30.980.10:FF:000004">
    <property type="entry name" value="Alanine--tRNA ligase, cytoplasmic"/>
    <property type="match status" value="1"/>
</dbReference>
<dbReference type="Gene3D" id="2.40.30.130">
    <property type="match status" value="1"/>
</dbReference>
<dbReference type="Gene3D" id="3.10.310.40">
    <property type="match status" value="1"/>
</dbReference>
<dbReference type="Gene3D" id="3.30.54.20">
    <property type="match status" value="1"/>
</dbReference>
<dbReference type="Gene3D" id="3.30.930.10">
    <property type="entry name" value="Bira Bifunctional Protein, Domain 2"/>
    <property type="match status" value="1"/>
</dbReference>
<dbReference type="Gene3D" id="3.30.980.10">
    <property type="entry name" value="Threonyl-trna Synthetase, Chain A, domain 2"/>
    <property type="match status" value="1"/>
</dbReference>
<dbReference type="HAMAP" id="MF_00036_B">
    <property type="entry name" value="Ala_tRNA_synth_B"/>
    <property type="match status" value="1"/>
</dbReference>
<dbReference type="InterPro" id="IPR045864">
    <property type="entry name" value="aa-tRNA-synth_II/BPL/LPL"/>
</dbReference>
<dbReference type="InterPro" id="IPR002318">
    <property type="entry name" value="Ala-tRNA-lgiase_IIc"/>
</dbReference>
<dbReference type="InterPro" id="IPR018162">
    <property type="entry name" value="Ala-tRNA-ligase_IIc_anticod-bd"/>
</dbReference>
<dbReference type="InterPro" id="IPR018165">
    <property type="entry name" value="Ala-tRNA-synth_IIc_core"/>
</dbReference>
<dbReference type="InterPro" id="IPR018164">
    <property type="entry name" value="Ala-tRNA-synth_IIc_N"/>
</dbReference>
<dbReference type="InterPro" id="IPR050058">
    <property type="entry name" value="Ala-tRNA_ligase"/>
</dbReference>
<dbReference type="InterPro" id="IPR023033">
    <property type="entry name" value="Ala_tRNA_ligase_euk/bac"/>
</dbReference>
<dbReference type="InterPro" id="IPR003156">
    <property type="entry name" value="DHHA1_dom"/>
</dbReference>
<dbReference type="InterPro" id="IPR018163">
    <property type="entry name" value="Thr/Ala-tRNA-synth_IIc_edit"/>
</dbReference>
<dbReference type="InterPro" id="IPR009000">
    <property type="entry name" value="Transl_B-barrel_sf"/>
</dbReference>
<dbReference type="InterPro" id="IPR012947">
    <property type="entry name" value="tRNA_SAD"/>
</dbReference>
<dbReference type="NCBIfam" id="TIGR00344">
    <property type="entry name" value="alaS"/>
    <property type="match status" value="1"/>
</dbReference>
<dbReference type="PANTHER" id="PTHR11777:SF9">
    <property type="entry name" value="ALANINE--TRNA LIGASE, CYTOPLASMIC"/>
    <property type="match status" value="1"/>
</dbReference>
<dbReference type="PANTHER" id="PTHR11777">
    <property type="entry name" value="ALANYL-TRNA SYNTHETASE"/>
    <property type="match status" value="1"/>
</dbReference>
<dbReference type="Pfam" id="PF02272">
    <property type="entry name" value="DHHA1"/>
    <property type="match status" value="1"/>
</dbReference>
<dbReference type="Pfam" id="PF01411">
    <property type="entry name" value="tRNA-synt_2c"/>
    <property type="match status" value="1"/>
</dbReference>
<dbReference type="Pfam" id="PF07973">
    <property type="entry name" value="tRNA_SAD"/>
    <property type="match status" value="1"/>
</dbReference>
<dbReference type="PRINTS" id="PR00980">
    <property type="entry name" value="TRNASYNTHALA"/>
</dbReference>
<dbReference type="SMART" id="SM00863">
    <property type="entry name" value="tRNA_SAD"/>
    <property type="match status" value="1"/>
</dbReference>
<dbReference type="SUPFAM" id="SSF55681">
    <property type="entry name" value="Class II aaRS and biotin synthetases"/>
    <property type="match status" value="1"/>
</dbReference>
<dbReference type="SUPFAM" id="SSF101353">
    <property type="entry name" value="Putative anticodon-binding domain of alanyl-tRNA synthetase (AlaRS)"/>
    <property type="match status" value="1"/>
</dbReference>
<dbReference type="SUPFAM" id="SSF55186">
    <property type="entry name" value="ThrRS/AlaRS common domain"/>
    <property type="match status" value="1"/>
</dbReference>
<dbReference type="SUPFAM" id="SSF50447">
    <property type="entry name" value="Translation proteins"/>
    <property type="match status" value="1"/>
</dbReference>
<dbReference type="PROSITE" id="PS50860">
    <property type="entry name" value="AA_TRNA_LIGASE_II_ALA"/>
    <property type="match status" value="1"/>
</dbReference>
<sequence length="860" mass="93969">MYMSTDEVRNAFLKFFESKGHQIVESSSLVPHNDPTLLFTNAGMNQFKDCFLGLEKRAYTRATTAQRCVRAGGKHNDLENVGFTARHHTFFEMLGNFSFGDYFKEDAISFAWEFLTDVLKLPADRLLVTVYETDDEAFDIWNKKVGVPADRIIRIGDKKGGKPYESDNFWQMGDTGPCGPCTEIFYDHGEHIWGGRPGTPEEDGDRFIEIWNNVFMQFNRHADGTMEPLPKPSVDTGMGIERISAIMQGVHSNYEIDVFQALIKAAAEVIGYEDLSNQSLRVIADHIRSCSFLIVDGVMPSNEGRGYVLRRIIRRAVRHGNKLGAQGAFFHKLVGVLADIMGTAGEELKRQQAVVEKVLRIEEENFGRTLERGMAILNEALDNLDGKVLDGETVFKLYDTYGFPADLTNDVAREREFAIDEEGFEKAMEEQRQRAREAGQFGTDYNAAIKVDTQTEFCGYVGTKGSSSVAAMFVEGNEVDSLSAGDKAIIVLGETPFYAESGGQCGDAGEIRTEAGVFRVEDTQKLGNAIAHHGVMAEGVLAKGDEVATIVDAERRAAISLNHSATHLLHAALRQVLGEHVTQKGSLVKAENLRFDFSHLEAVTAAELKEVERLVNAQIRRNHVIETNVMDIESAKKKGAMALFGEKYDDEVRVLSMGDFSTELCGGIHASNTGDIGLFKITSESGIAAGIRRIEAVTGEAALDAIEAQAAKYEEKLAESAQKAKTLEKELQKLKDKMAAAESANIMGKAVEVNGTKVLVAALEGADSKNLRTMVDDIKNQMGSGVVLLANVTDDKVGLIAGVTKDLVGKVKAGDLVKMVAEQVGGKGGGRPDMAQAGGTDVSALPEAIKTVQPWLEERL</sequence>
<evidence type="ECO:0000255" key="1">
    <source>
        <dbReference type="HAMAP-Rule" id="MF_00036"/>
    </source>
</evidence>
<proteinExistence type="inferred from homology"/>
<keyword id="KW-0030">Aminoacyl-tRNA synthetase</keyword>
<keyword id="KW-0067">ATP-binding</keyword>
<keyword id="KW-0963">Cytoplasm</keyword>
<keyword id="KW-0436">Ligase</keyword>
<keyword id="KW-0479">Metal-binding</keyword>
<keyword id="KW-0547">Nucleotide-binding</keyword>
<keyword id="KW-0648">Protein biosynthesis</keyword>
<keyword id="KW-0694">RNA-binding</keyword>
<keyword id="KW-0820">tRNA-binding</keyword>
<keyword id="KW-0862">Zinc</keyword>
<feature type="chain" id="PRO_0000075243" description="Alanine--tRNA ligase">
    <location>
        <begin position="1"/>
        <end position="860"/>
    </location>
</feature>
<feature type="binding site" evidence="1">
    <location>
        <position position="563"/>
    </location>
    <ligand>
        <name>Zn(2+)</name>
        <dbReference type="ChEBI" id="CHEBI:29105"/>
    </ligand>
</feature>
<feature type="binding site" evidence="1">
    <location>
        <position position="567"/>
    </location>
    <ligand>
        <name>Zn(2+)</name>
        <dbReference type="ChEBI" id="CHEBI:29105"/>
    </ligand>
</feature>
<feature type="binding site" evidence="1">
    <location>
        <position position="665"/>
    </location>
    <ligand>
        <name>Zn(2+)</name>
        <dbReference type="ChEBI" id="CHEBI:29105"/>
    </ligand>
</feature>
<feature type="binding site" evidence="1">
    <location>
        <position position="669"/>
    </location>
    <ligand>
        <name>Zn(2+)</name>
        <dbReference type="ChEBI" id="CHEBI:29105"/>
    </ligand>
</feature>
<comment type="function">
    <text evidence="1">Catalyzes the attachment of alanine to tRNA(Ala) in a two-step reaction: alanine is first activated by ATP to form Ala-AMP and then transferred to the acceptor end of tRNA(Ala). Also edits incorrectly charged Ser-tRNA(Ala) and Gly-tRNA(Ala) via its editing domain.</text>
</comment>
<comment type="catalytic activity">
    <reaction evidence="1">
        <text>tRNA(Ala) + L-alanine + ATP = L-alanyl-tRNA(Ala) + AMP + diphosphate</text>
        <dbReference type="Rhea" id="RHEA:12540"/>
        <dbReference type="Rhea" id="RHEA-COMP:9657"/>
        <dbReference type="Rhea" id="RHEA-COMP:9923"/>
        <dbReference type="ChEBI" id="CHEBI:30616"/>
        <dbReference type="ChEBI" id="CHEBI:33019"/>
        <dbReference type="ChEBI" id="CHEBI:57972"/>
        <dbReference type="ChEBI" id="CHEBI:78442"/>
        <dbReference type="ChEBI" id="CHEBI:78497"/>
        <dbReference type="ChEBI" id="CHEBI:456215"/>
        <dbReference type="EC" id="6.1.1.7"/>
    </reaction>
</comment>
<comment type="cofactor">
    <cofactor evidence="1">
        <name>Zn(2+)</name>
        <dbReference type="ChEBI" id="CHEBI:29105"/>
    </cofactor>
    <text evidence="1">Binds 1 zinc ion per subunit.</text>
</comment>
<comment type="subcellular location">
    <subcellularLocation>
        <location evidence="1">Cytoplasm</location>
    </subcellularLocation>
</comment>
<comment type="domain">
    <text evidence="1">Consists of three domains; the N-terminal catalytic domain, the editing domain and the C-terminal C-Ala domain. The editing domain removes incorrectly charged amino acids, while the C-Ala domain, along with tRNA(Ala), serves as a bridge to cooperatively bring together the editing and aminoacylation centers thus stimulating deacylation of misacylated tRNAs.</text>
</comment>
<comment type="similarity">
    <text evidence="1">Belongs to the class-II aminoacyl-tRNA synthetase family.</text>
</comment>
<name>SYA_VIBPA</name>
<accession>Q87LR3</accession>
<reference key="1">
    <citation type="journal article" date="2003" name="Lancet">
        <title>Genome sequence of Vibrio parahaemolyticus: a pathogenic mechanism distinct from that of V. cholerae.</title>
        <authorList>
            <person name="Makino K."/>
            <person name="Oshima K."/>
            <person name="Kurokawa K."/>
            <person name="Yokoyama K."/>
            <person name="Uda T."/>
            <person name="Tagomori K."/>
            <person name="Iijima Y."/>
            <person name="Najima M."/>
            <person name="Nakano M."/>
            <person name="Yamashita A."/>
            <person name="Kubota Y."/>
            <person name="Kimura S."/>
            <person name="Yasunaga T."/>
            <person name="Honda T."/>
            <person name="Shinagawa H."/>
            <person name="Hattori M."/>
            <person name="Iida T."/>
        </authorList>
    </citation>
    <scope>NUCLEOTIDE SEQUENCE [LARGE SCALE GENOMIC DNA]</scope>
    <source>
        <strain>RIMD 2210633</strain>
    </source>
</reference>
<organism>
    <name type="scientific">Vibrio parahaemolyticus serotype O3:K6 (strain RIMD 2210633)</name>
    <dbReference type="NCBI Taxonomy" id="223926"/>
    <lineage>
        <taxon>Bacteria</taxon>
        <taxon>Pseudomonadati</taxon>
        <taxon>Pseudomonadota</taxon>
        <taxon>Gammaproteobacteria</taxon>
        <taxon>Vibrionales</taxon>
        <taxon>Vibrionaceae</taxon>
        <taxon>Vibrio</taxon>
    </lineage>
</organism>